<comment type="function">
    <text evidence="1">Catalyzes the condensation of pantoate with beta-alanine in an ATP-dependent reaction via a pantoyl-adenylate intermediate.</text>
</comment>
<comment type="catalytic activity">
    <reaction evidence="1">
        <text>(R)-pantoate + beta-alanine + ATP = (R)-pantothenate + AMP + diphosphate + H(+)</text>
        <dbReference type="Rhea" id="RHEA:10912"/>
        <dbReference type="ChEBI" id="CHEBI:15378"/>
        <dbReference type="ChEBI" id="CHEBI:15980"/>
        <dbReference type="ChEBI" id="CHEBI:29032"/>
        <dbReference type="ChEBI" id="CHEBI:30616"/>
        <dbReference type="ChEBI" id="CHEBI:33019"/>
        <dbReference type="ChEBI" id="CHEBI:57966"/>
        <dbReference type="ChEBI" id="CHEBI:456215"/>
        <dbReference type="EC" id="6.3.2.1"/>
    </reaction>
</comment>
<comment type="pathway">
    <text evidence="1">Cofactor biosynthesis; (R)-pantothenate biosynthesis; (R)-pantothenate from (R)-pantoate and beta-alanine: step 1/1.</text>
</comment>
<comment type="subunit">
    <text evidence="1">Homodimer.</text>
</comment>
<comment type="subcellular location">
    <subcellularLocation>
        <location evidence="1">Cytoplasm</location>
    </subcellularLocation>
</comment>
<comment type="miscellaneous">
    <text evidence="1">The reaction proceeds by a bi uni uni bi ping pong mechanism.</text>
</comment>
<comment type="similarity">
    <text evidence="1">Belongs to the pantothenate synthetase family.</text>
</comment>
<proteinExistence type="inferred from homology"/>
<keyword id="KW-0067">ATP-binding</keyword>
<keyword id="KW-0963">Cytoplasm</keyword>
<keyword id="KW-0436">Ligase</keyword>
<keyword id="KW-0547">Nucleotide-binding</keyword>
<keyword id="KW-0566">Pantothenate biosynthesis</keyword>
<keyword id="KW-1185">Reference proteome</keyword>
<dbReference type="EC" id="6.3.2.1" evidence="1"/>
<dbReference type="EMBL" id="CR555306">
    <property type="protein sequence ID" value="CAI10162.1"/>
    <property type="molecule type" value="Genomic_DNA"/>
</dbReference>
<dbReference type="RefSeq" id="WP_011239807.1">
    <property type="nucleotide sequence ID" value="NC_006513.1"/>
</dbReference>
<dbReference type="SMR" id="Q5NXQ2"/>
<dbReference type="STRING" id="76114.ebA7120"/>
<dbReference type="KEGG" id="eba:ebA7120"/>
<dbReference type="eggNOG" id="COG0414">
    <property type="taxonomic scope" value="Bacteria"/>
</dbReference>
<dbReference type="HOGENOM" id="CLU_047148_0_0_4"/>
<dbReference type="OrthoDB" id="9773087at2"/>
<dbReference type="UniPathway" id="UPA00028">
    <property type="reaction ID" value="UER00005"/>
</dbReference>
<dbReference type="Proteomes" id="UP000006552">
    <property type="component" value="Chromosome"/>
</dbReference>
<dbReference type="GO" id="GO:0005829">
    <property type="term" value="C:cytosol"/>
    <property type="evidence" value="ECO:0007669"/>
    <property type="project" value="TreeGrafter"/>
</dbReference>
<dbReference type="GO" id="GO:0005524">
    <property type="term" value="F:ATP binding"/>
    <property type="evidence" value="ECO:0007669"/>
    <property type="project" value="UniProtKB-KW"/>
</dbReference>
<dbReference type="GO" id="GO:0004592">
    <property type="term" value="F:pantoate-beta-alanine ligase activity"/>
    <property type="evidence" value="ECO:0007669"/>
    <property type="project" value="UniProtKB-UniRule"/>
</dbReference>
<dbReference type="GO" id="GO:0015940">
    <property type="term" value="P:pantothenate biosynthetic process"/>
    <property type="evidence" value="ECO:0007669"/>
    <property type="project" value="UniProtKB-UniRule"/>
</dbReference>
<dbReference type="CDD" id="cd00560">
    <property type="entry name" value="PanC"/>
    <property type="match status" value="1"/>
</dbReference>
<dbReference type="FunFam" id="3.30.1300.10:FF:000001">
    <property type="entry name" value="Pantothenate synthetase"/>
    <property type="match status" value="1"/>
</dbReference>
<dbReference type="Gene3D" id="3.40.50.620">
    <property type="entry name" value="HUPs"/>
    <property type="match status" value="1"/>
</dbReference>
<dbReference type="Gene3D" id="3.30.1300.10">
    <property type="entry name" value="Pantoate-beta-alanine ligase, C-terminal domain"/>
    <property type="match status" value="1"/>
</dbReference>
<dbReference type="HAMAP" id="MF_00158">
    <property type="entry name" value="PanC"/>
    <property type="match status" value="1"/>
</dbReference>
<dbReference type="InterPro" id="IPR003721">
    <property type="entry name" value="Pantoate_ligase"/>
</dbReference>
<dbReference type="InterPro" id="IPR042176">
    <property type="entry name" value="Pantoate_ligase_C"/>
</dbReference>
<dbReference type="InterPro" id="IPR014729">
    <property type="entry name" value="Rossmann-like_a/b/a_fold"/>
</dbReference>
<dbReference type="NCBIfam" id="TIGR00018">
    <property type="entry name" value="panC"/>
    <property type="match status" value="1"/>
</dbReference>
<dbReference type="PANTHER" id="PTHR21299">
    <property type="entry name" value="CYTIDYLATE KINASE/PANTOATE-BETA-ALANINE LIGASE"/>
    <property type="match status" value="1"/>
</dbReference>
<dbReference type="PANTHER" id="PTHR21299:SF1">
    <property type="entry name" value="PANTOATE--BETA-ALANINE LIGASE"/>
    <property type="match status" value="1"/>
</dbReference>
<dbReference type="Pfam" id="PF02569">
    <property type="entry name" value="Pantoate_ligase"/>
    <property type="match status" value="1"/>
</dbReference>
<dbReference type="SUPFAM" id="SSF52374">
    <property type="entry name" value="Nucleotidylyl transferase"/>
    <property type="match status" value="1"/>
</dbReference>
<gene>
    <name evidence="1" type="primary">panC</name>
    <name type="ordered locus">AZOSEA40370</name>
    <name type="ORF">ebA7120</name>
</gene>
<evidence type="ECO:0000255" key="1">
    <source>
        <dbReference type="HAMAP-Rule" id="MF_00158"/>
    </source>
</evidence>
<accession>Q5NXQ2</accession>
<protein>
    <recommendedName>
        <fullName evidence="1">Pantothenate synthetase</fullName>
        <shortName evidence="1">PS</shortName>
        <ecNumber evidence="1">6.3.2.1</ecNumber>
    </recommendedName>
    <alternativeName>
        <fullName evidence="1">Pantoate--beta-alanine ligase</fullName>
    </alternativeName>
    <alternativeName>
        <fullName evidence="1">Pantoate-activating enzyme</fullName>
    </alternativeName>
</protein>
<organism>
    <name type="scientific">Aromatoleum aromaticum (strain DSM 19018 / LMG 30748 / EbN1)</name>
    <name type="common">Azoarcus sp. (strain EbN1)</name>
    <dbReference type="NCBI Taxonomy" id="76114"/>
    <lineage>
        <taxon>Bacteria</taxon>
        <taxon>Pseudomonadati</taxon>
        <taxon>Pseudomonadota</taxon>
        <taxon>Betaproteobacteria</taxon>
        <taxon>Rhodocyclales</taxon>
        <taxon>Rhodocyclaceae</taxon>
        <taxon>Aromatoleum</taxon>
    </lineage>
</organism>
<name>PANC_AROAE</name>
<feature type="chain" id="PRO_0000305395" description="Pantothenate synthetase">
    <location>
        <begin position="1"/>
        <end position="276"/>
    </location>
</feature>
<feature type="active site" description="Proton donor" evidence="1">
    <location>
        <position position="34"/>
    </location>
</feature>
<feature type="binding site" evidence="1">
    <location>
        <begin position="27"/>
        <end position="34"/>
    </location>
    <ligand>
        <name>ATP</name>
        <dbReference type="ChEBI" id="CHEBI:30616"/>
    </ligand>
</feature>
<feature type="binding site" evidence="1">
    <location>
        <position position="58"/>
    </location>
    <ligand>
        <name>(R)-pantoate</name>
        <dbReference type="ChEBI" id="CHEBI:15980"/>
    </ligand>
</feature>
<feature type="binding site" evidence="1">
    <location>
        <position position="58"/>
    </location>
    <ligand>
        <name>beta-alanine</name>
        <dbReference type="ChEBI" id="CHEBI:57966"/>
    </ligand>
</feature>
<feature type="binding site" evidence="1">
    <location>
        <begin position="145"/>
        <end position="148"/>
    </location>
    <ligand>
        <name>ATP</name>
        <dbReference type="ChEBI" id="CHEBI:30616"/>
    </ligand>
</feature>
<feature type="binding site" evidence="1">
    <location>
        <position position="151"/>
    </location>
    <ligand>
        <name>(R)-pantoate</name>
        <dbReference type="ChEBI" id="CHEBI:15980"/>
    </ligand>
</feature>
<feature type="binding site" evidence="1">
    <location>
        <position position="174"/>
    </location>
    <ligand>
        <name>ATP</name>
        <dbReference type="ChEBI" id="CHEBI:30616"/>
    </ligand>
</feature>
<feature type="binding site" evidence="1">
    <location>
        <begin position="182"/>
        <end position="185"/>
    </location>
    <ligand>
        <name>ATP</name>
        <dbReference type="ChEBI" id="CHEBI:30616"/>
    </ligand>
</feature>
<sequence>MQIHTTIQSLRAARAAVSGKVALVPTMGNLHDGHIALMRQATGHADSIVASIFVNRLQFGPRDDFDRYPRTFKADCERLEAAGVAHVFAPDEGEMYPQPQQYHVDPAPAHVTILEGEFRPDHFRGVATVVLKLLNIVRPDVALFGKKDYQQLMVLTNMVRELAVAVEVVPGETIRATDGLALSSRNGYLSAEERVEAPRLYRELARVRDAVRDGDRDFLKLETEAVAGLAAHGWHPDYIAVRRRADLQPPGDANDPLVVLAAAKLGHTRLIDNLEI</sequence>
<reference key="1">
    <citation type="journal article" date="2005" name="Arch. Microbiol.">
        <title>The genome sequence of an anaerobic aromatic-degrading denitrifying bacterium, strain EbN1.</title>
        <authorList>
            <person name="Rabus R."/>
            <person name="Kube M."/>
            <person name="Heider J."/>
            <person name="Beck A."/>
            <person name="Heitmann K."/>
            <person name="Widdel F."/>
            <person name="Reinhardt R."/>
        </authorList>
    </citation>
    <scope>NUCLEOTIDE SEQUENCE [LARGE SCALE GENOMIC DNA]</scope>
    <source>
        <strain>DSM 19018 / LMG 30748 / EbN1</strain>
    </source>
</reference>